<evidence type="ECO:0000305" key="1"/>
<evidence type="ECO:0007829" key="2">
    <source>
        <dbReference type="PDB" id="1CRL"/>
    </source>
</evidence>
<evidence type="ECO:0007829" key="3">
    <source>
        <dbReference type="PDB" id="1LPM"/>
    </source>
</evidence>
<evidence type="ECO:0007829" key="4">
    <source>
        <dbReference type="PDB" id="1TRH"/>
    </source>
</evidence>
<protein>
    <recommendedName>
        <fullName>Lipase 1</fullName>
        <ecNumber>3.1.1.3</ecNumber>
    </recommendedName>
</protein>
<sequence>MELALALSLIASVAAAPTATLANGDTITGLNAIINEAFLGIPFAEPPVGNLRFKDPVPYSGSLDGQKFTSYGPSCMQQNPEGTYEENLPKAALDLVMQSKVFEAVSPSSEDCLTINVVRPPGTKAGANLPVMLWIFGGGFEVGGTSTFPPAQMITKSIAMGKPIIHVSVNYRVSSWGFLAGDEIKAEGSANAGLKDQRLGMQWVADNIAAFGGDPTKVTIFGESAGSMSVMCHILWNDGDNTYKGKPLFRAGIMQSGAMVPSDAVDGIYGNEIFDLLASNAGCGSASDKLACLRGVSSDTLEDATNNTPGFLAYSSLRLSYLPRPDGVNITDDMYALVREGKYANIPVIIGDQNDEGTFFGTSSLNVTTDAQAREYFKQSFVHASDAEIDTLMTAYPGDITQGSPFDTGILNALTPQFKRISAVLGDLGFTLARRYFLNHYTGGTKYSFLSKQLSGLPVLGTFHSNDIVFQDYLLGSGSLIYNNAFIAFATDLDPNTAGLLVKWPEYTSSSQSGNNLMMINALGLYTGKDNFRTAGYDALFSNPPSFFV</sequence>
<keyword id="KW-0002">3D-structure</keyword>
<keyword id="KW-0903">Direct protein sequencing</keyword>
<keyword id="KW-1015">Disulfide bond</keyword>
<keyword id="KW-0325">Glycoprotein</keyword>
<keyword id="KW-0378">Hydrolase</keyword>
<keyword id="KW-0442">Lipid degradation</keyword>
<keyword id="KW-0443">Lipid metabolism</keyword>
<keyword id="KW-0732">Signal</keyword>
<feature type="signal peptide">
    <location>
        <begin position="1"/>
        <end position="15"/>
    </location>
</feature>
<feature type="chain" id="PRO_0000008619" description="Lipase 1">
    <location>
        <begin position="16"/>
        <end position="549"/>
    </location>
</feature>
<feature type="active site" description="Acyl-ester intermediate">
    <location>
        <position position="224"/>
    </location>
</feature>
<feature type="active site" description="Charge relay system">
    <location>
        <position position="356"/>
    </location>
</feature>
<feature type="active site" description="Charge relay system">
    <location>
        <position position="464"/>
    </location>
</feature>
<feature type="glycosylation site" description="N-linked (GlcNAc...) asparagine">
    <location>
        <position position="329"/>
    </location>
</feature>
<feature type="glycosylation site" description="N-linked (GlcNAc...) asparagine">
    <location>
        <position position="366"/>
    </location>
</feature>
<feature type="disulfide bond">
    <location>
        <begin position="75"/>
        <end position="112"/>
    </location>
</feature>
<feature type="disulfide bond">
    <location>
        <begin position="283"/>
        <end position="292"/>
    </location>
</feature>
<feature type="sequence variant">
    <original>G</original>
    <variation>Q</variation>
    <location>
        <position position="398"/>
    </location>
</feature>
<feature type="strand" evidence="2">
    <location>
        <begin position="18"/>
        <end position="20"/>
    </location>
</feature>
<feature type="strand" evidence="2">
    <location>
        <begin position="26"/>
        <end position="28"/>
    </location>
</feature>
<feature type="strand" evidence="2">
    <location>
        <begin position="33"/>
        <end position="42"/>
    </location>
</feature>
<feature type="helix" evidence="2">
    <location>
        <begin position="49"/>
        <end position="51"/>
    </location>
</feature>
<feature type="helix" evidence="4">
    <location>
        <begin position="84"/>
        <end position="86"/>
    </location>
</feature>
<feature type="helix" evidence="2">
    <location>
        <begin position="88"/>
        <end position="97"/>
    </location>
</feature>
<feature type="helix" evidence="2">
    <location>
        <begin position="100"/>
        <end position="105"/>
    </location>
</feature>
<feature type="strand" evidence="4">
    <location>
        <begin position="106"/>
        <end position="108"/>
    </location>
</feature>
<feature type="strand" evidence="2">
    <location>
        <begin position="114"/>
        <end position="119"/>
    </location>
</feature>
<feature type="strand" evidence="2">
    <location>
        <begin position="129"/>
        <end position="135"/>
    </location>
</feature>
<feature type="turn" evidence="2">
    <location>
        <begin position="139"/>
        <end position="141"/>
    </location>
</feature>
<feature type="helix" evidence="3">
    <location>
        <begin position="145"/>
        <end position="147"/>
    </location>
</feature>
<feature type="helix" evidence="2">
    <location>
        <begin position="151"/>
        <end position="159"/>
    </location>
</feature>
<feature type="strand" evidence="2">
    <location>
        <begin position="165"/>
        <end position="169"/>
    </location>
</feature>
<feature type="helix" evidence="2">
    <location>
        <begin position="174"/>
        <end position="178"/>
    </location>
</feature>
<feature type="helix" evidence="2">
    <location>
        <begin position="182"/>
        <end position="187"/>
    </location>
</feature>
<feature type="helix" evidence="2">
    <location>
        <begin position="192"/>
        <end position="207"/>
    </location>
</feature>
<feature type="helix" evidence="2">
    <location>
        <begin position="208"/>
        <end position="211"/>
    </location>
</feature>
<feature type="strand" evidence="2">
    <location>
        <begin position="213"/>
        <end position="223"/>
    </location>
</feature>
<feature type="helix" evidence="2">
    <location>
        <begin position="225"/>
        <end position="235"/>
    </location>
</feature>
<feature type="helix" evidence="2">
    <location>
        <begin position="236"/>
        <end position="239"/>
    </location>
</feature>
<feature type="strand" evidence="2">
    <location>
        <begin position="246"/>
        <end position="248"/>
    </location>
</feature>
<feature type="strand" evidence="2">
    <location>
        <begin position="250"/>
        <end position="256"/>
    </location>
</feature>
<feature type="helix" evidence="2">
    <location>
        <begin position="268"/>
        <end position="281"/>
    </location>
</feature>
<feature type="helix" evidence="2">
    <location>
        <begin position="289"/>
        <end position="295"/>
    </location>
</feature>
<feature type="helix" evidence="2">
    <location>
        <begin position="298"/>
        <end position="306"/>
    </location>
</feature>
<feature type="turn" evidence="2">
    <location>
        <begin position="314"/>
        <end position="317"/>
    </location>
</feature>
<feature type="strand" evidence="2">
    <location>
        <begin position="327"/>
        <end position="330"/>
    </location>
</feature>
<feature type="helix" evidence="2">
    <location>
        <begin position="334"/>
        <end position="339"/>
    </location>
</feature>
<feature type="strand" evidence="2">
    <location>
        <begin position="348"/>
        <end position="353"/>
    </location>
</feature>
<feature type="helix" evidence="2">
    <location>
        <begin position="358"/>
        <end position="361"/>
    </location>
</feature>
<feature type="helix" evidence="2">
    <location>
        <begin position="362"/>
        <end position="364"/>
    </location>
</feature>
<feature type="helix" evidence="2">
    <location>
        <begin position="370"/>
        <end position="380"/>
    </location>
</feature>
<feature type="helix" evidence="2">
    <location>
        <begin position="386"/>
        <end position="395"/>
    </location>
</feature>
<feature type="helix" evidence="2">
    <location>
        <begin position="400"/>
        <end position="402"/>
    </location>
</feature>
<feature type="strand" evidence="2">
    <location>
        <begin position="403"/>
        <end position="405"/>
    </location>
</feature>
<feature type="turn" evidence="2">
    <location>
        <begin position="409"/>
        <end position="412"/>
    </location>
</feature>
<feature type="strand" evidence="2">
    <location>
        <begin position="414"/>
        <end position="417"/>
    </location>
</feature>
<feature type="helix" evidence="2">
    <location>
        <begin position="418"/>
        <end position="429"/>
    </location>
</feature>
<feature type="helix" evidence="2">
    <location>
        <begin position="431"/>
        <end position="440"/>
    </location>
</feature>
<feature type="strand" evidence="2">
    <location>
        <begin position="446"/>
        <end position="451"/>
    </location>
</feature>
<feature type="turn" evidence="2">
    <location>
        <begin position="453"/>
        <end position="456"/>
    </location>
</feature>
<feature type="turn" evidence="2">
    <location>
        <begin position="458"/>
        <end position="460"/>
    </location>
</feature>
<feature type="strand" evidence="2">
    <location>
        <begin position="461"/>
        <end position="463"/>
    </location>
</feature>
<feature type="helix" evidence="2">
    <location>
        <begin position="466"/>
        <end position="472"/>
    </location>
</feature>
<feature type="helix" evidence="2">
    <location>
        <begin position="479"/>
        <end position="482"/>
    </location>
</feature>
<feature type="helix" evidence="2">
    <location>
        <begin position="484"/>
        <end position="492"/>
    </location>
</feature>
<feature type="helix" evidence="2">
    <location>
        <begin position="495"/>
        <end position="498"/>
    </location>
</feature>
<feature type="strand" evidence="4">
    <location>
        <begin position="512"/>
        <end position="514"/>
    </location>
</feature>
<feature type="strand" evidence="2">
    <location>
        <begin position="517"/>
        <end position="520"/>
    </location>
</feature>
<feature type="strand" evidence="2">
    <location>
        <begin position="525"/>
        <end position="528"/>
    </location>
</feature>
<feature type="helix" evidence="2">
    <location>
        <begin position="534"/>
        <end position="541"/>
    </location>
</feature>
<feature type="helix" evidence="2">
    <location>
        <begin position="544"/>
        <end position="547"/>
    </location>
</feature>
<reference key="1">
    <citation type="journal article" date="1992" name="Biochim. Biophys. Acta">
        <title>Cloning and nucleotide sequences of two lipase genes from Candida cylindracea.</title>
        <authorList>
            <person name="Longhi S."/>
            <person name="Fusetti F."/>
            <person name="Grandori R."/>
            <person name="Lotti M."/>
            <person name="Vanoni M."/>
            <person name="Alberghina L."/>
        </authorList>
    </citation>
    <scope>NUCLEOTIDE SEQUENCE [GENOMIC DNA]</scope>
    <source>
        <strain>ATCC 14830 / CBS 6330 / DSM 2031 / MS-5 / NRRL Y-17506</strain>
    </source>
</reference>
<reference key="2">
    <citation type="journal article" date="1989" name="Nature">
        <title>The codon CUG is read as serine in an asporogenic yeast Candida cylindracea.</title>
        <authorList>
            <person name="Kawaguchi Y."/>
            <person name="Honda H."/>
            <person name="Taniguchi-Morimura J."/>
            <person name="Iwasaki S."/>
        </authorList>
    </citation>
    <scope>NUCLEOTIDE SEQUENCE [MRNA] OF 12-549</scope>
    <scope>PARTIAL PROTEIN SEQUENCE</scope>
    <source>
        <strain>ATCC 14830 / CBS 6330 / DSM 2031 / MS-5 / NRRL Y-17506</strain>
    </source>
</reference>
<reference key="3">
    <citation type="journal article" date="1993" name="J. Biol. Chem.">
        <title>Insights into interfacial activation from an open structure of Candida rugosa lipase.</title>
        <authorList>
            <person name="Grochulski P."/>
            <person name="Li Y."/>
            <person name="Schrag J.D."/>
            <person name="Bouthillier F."/>
            <person name="Smith P."/>
            <person name="Harrison D."/>
            <person name="Rubin B."/>
            <person name="Cygler M."/>
        </authorList>
    </citation>
    <scope>X-RAY CRYSTALLOGRAPHY (2.06 ANGSTROMS)</scope>
</reference>
<reference key="4">
    <citation type="journal article" date="1994" name="Biochemistry">
        <title>Analogs of reaction intermediates identify a unique substrate binding site in Candida rugosa lipase.</title>
        <authorList>
            <person name="Grochulski P."/>
            <person name="Bouthillier F."/>
            <person name="Kazlauskas R.J."/>
            <person name="Serreqi A.N."/>
            <person name="Schrag J.D."/>
            <person name="Ziomek E."/>
            <person name="Cygler M."/>
        </authorList>
    </citation>
    <scope>X-RAY CRYSTALLOGRAPHY (2.05 ANGSTROMS)</scope>
</reference>
<reference key="5">
    <citation type="journal article" date="1998" name="Yeast">
        <title>Candida rugosa lipases: molecular biology and versatility in biotechnology.</title>
        <authorList>
            <person name="Benjamin S."/>
            <person name="Pandey A."/>
        </authorList>
    </citation>
    <scope>REVIEW</scope>
</reference>
<accession>P20261</accession>
<comment type="catalytic activity">
    <reaction>
        <text>a triacylglycerol + H2O = a diacylglycerol + a fatty acid + H(+)</text>
        <dbReference type="Rhea" id="RHEA:12044"/>
        <dbReference type="ChEBI" id="CHEBI:15377"/>
        <dbReference type="ChEBI" id="CHEBI:15378"/>
        <dbReference type="ChEBI" id="CHEBI:17855"/>
        <dbReference type="ChEBI" id="CHEBI:18035"/>
        <dbReference type="ChEBI" id="CHEBI:28868"/>
        <dbReference type="EC" id="3.1.1.3"/>
    </reaction>
</comment>
<comment type="similarity">
    <text evidence="1">Belongs to the type-B carboxylesterase/lipase family.</text>
</comment>
<gene>
    <name type="primary">LIP1</name>
</gene>
<name>LIP1_DIURU</name>
<organism>
    <name type="scientific">Diutina rugosa</name>
    <name type="common">Yeast</name>
    <name type="synonym">Candida rugosa</name>
    <dbReference type="NCBI Taxonomy" id="5481"/>
    <lineage>
        <taxon>Eukaryota</taxon>
        <taxon>Fungi</taxon>
        <taxon>Dikarya</taxon>
        <taxon>Ascomycota</taxon>
        <taxon>Saccharomycotina</taxon>
        <taxon>Pichiomycetes</taxon>
        <taxon>Debaryomycetaceae</taxon>
        <taxon>Diutina</taxon>
    </lineage>
</organism>
<dbReference type="EC" id="3.1.1.3"/>
<dbReference type="EMBL" id="X64703">
    <property type="protein sequence ID" value="CAA45957.1"/>
    <property type="molecule type" value="Genomic_DNA"/>
</dbReference>
<dbReference type="EMBL" id="X16712">
    <property type="protein sequence ID" value="CAA34684.1"/>
    <property type="molecule type" value="mRNA"/>
</dbReference>
<dbReference type="PIR" id="S05684">
    <property type="entry name" value="S05684"/>
</dbReference>
<dbReference type="PIR" id="S23448">
    <property type="entry name" value="S23448"/>
</dbReference>
<dbReference type="PDB" id="1CRL">
    <property type="method" value="X-ray"/>
    <property type="resolution" value="2.06 A"/>
    <property type="chains" value="A=16-549"/>
</dbReference>
<dbReference type="PDB" id="1LPM">
    <property type="method" value="X-ray"/>
    <property type="resolution" value="2.18 A"/>
    <property type="chains" value="A=1-549"/>
</dbReference>
<dbReference type="PDB" id="1LPN">
    <property type="method" value="X-ray"/>
    <property type="resolution" value="2.18 A"/>
    <property type="chains" value="A=1-549"/>
</dbReference>
<dbReference type="PDB" id="1LPO">
    <property type="method" value="X-ray"/>
    <property type="resolution" value="2.18 A"/>
    <property type="chains" value="A=1-549"/>
</dbReference>
<dbReference type="PDB" id="1LPP">
    <property type="method" value="X-ray"/>
    <property type="resolution" value="2.18 A"/>
    <property type="chains" value="A=1-549"/>
</dbReference>
<dbReference type="PDB" id="1LPS">
    <property type="method" value="X-ray"/>
    <property type="resolution" value="2.18 A"/>
    <property type="chains" value="A=1-549"/>
</dbReference>
<dbReference type="PDB" id="1TRH">
    <property type="method" value="X-ray"/>
    <property type="resolution" value="2.10 A"/>
    <property type="chains" value="A=16-549"/>
</dbReference>
<dbReference type="PDB" id="3RAR">
    <property type="method" value="X-ray"/>
    <property type="resolution" value="2.19 A"/>
    <property type="chains" value="A=16-549"/>
</dbReference>
<dbReference type="PDBsum" id="1CRL"/>
<dbReference type="PDBsum" id="1LPM"/>
<dbReference type="PDBsum" id="1LPN"/>
<dbReference type="PDBsum" id="1LPO"/>
<dbReference type="PDBsum" id="1LPP"/>
<dbReference type="PDBsum" id="1LPS"/>
<dbReference type="PDBsum" id="1TRH"/>
<dbReference type="PDBsum" id="3RAR"/>
<dbReference type="SMR" id="P20261"/>
<dbReference type="DrugBank" id="DB02776">
    <property type="generic name" value="1-Hexadecanosulfonic Acid"/>
</dbReference>
<dbReference type="ESTHER" id="canru-1lipa">
    <property type="family name" value="Fungal_carboxylesterase_lipase"/>
</dbReference>
<dbReference type="GlyCosmos" id="P20261">
    <property type="glycosylation" value="2 sites, No reported glycans"/>
</dbReference>
<dbReference type="BRENDA" id="3.1.1.3">
    <property type="organism ID" value="1139"/>
</dbReference>
<dbReference type="EvolutionaryTrace" id="P20261"/>
<dbReference type="GO" id="GO:0004806">
    <property type="term" value="F:triacylglycerol lipase activity"/>
    <property type="evidence" value="ECO:0007669"/>
    <property type="project" value="UniProtKB-EC"/>
</dbReference>
<dbReference type="GO" id="GO:0016042">
    <property type="term" value="P:lipid catabolic process"/>
    <property type="evidence" value="ECO:0007669"/>
    <property type="project" value="UniProtKB-KW"/>
</dbReference>
<dbReference type="CDD" id="cd00312">
    <property type="entry name" value="Esterase_lipase"/>
    <property type="match status" value="1"/>
</dbReference>
<dbReference type="Gene3D" id="3.40.50.1820">
    <property type="entry name" value="alpha/beta hydrolase"/>
    <property type="match status" value="1"/>
</dbReference>
<dbReference type="InterPro" id="IPR029058">
    <property type="entry name" value="AB_hydrolase_fold"/>
</dbReference>
<dbReference type="InterPro" id="IPR002018">
    <property type="entry name" value="CarbesteraseB"/>
</dbReference>
<dbReference type="InterPro" id="IPR019826">
    <property type="entry name" value="Carboxylesterase_B_AS"/>
</dbReference>
<dbReference type="InterPro" id="IPR019819">
    <property type="entry name" value="Carboxylesterase_B_CS"/>
</dbReference>
<dbReference type="InterPro" id="IPR050309">
    <property type="entry name" value="Type-B_Carboxylest/Lipase"/>
</dbReference>
<dbReference type="PANTHER" id="PTHR11559">
    <property type="entry name" value="CARBOXYLESTERASE"/>
    <property type="match status" value="1"/>
</dbReference>
<dbReference type="Pfam" id="PF00135">
    <property type="entry name" value="COesterase"/>
    <property type="match status" value="1"/>
</dbReference>
<dbReference type="SUPFAM" id="SSF53474">
    <property type="entry name" value="alpha/beta-Hydrolases"/>
    <property type="match status" value="1"/>
</dbReference>
<dbReference type="PROSITE" id="PS00122">
    <property type="entry name" value="CARBOXYLESTERASE_B_1"/>
    <property type="match status" value="1"/>
</dbReference>
<dbReference type="PROSITE" id="PS00941">
    <property type="entry name" value="CARBOXYLESTERASE_B_2"/>
    <property type="match status" value="1"/>
</dbReference>
<proteinExistence type="evidence at protein level"/>